<gene>
    <name type="primary">C1D</name>
</gene>
<evidence type="ECO:0000250" key="1"/>
<evidence type="ECO:0000250" key="2">
    <source>
        <dbReference type="UniProtKB" id="O35473"/>
    </source>
</evidence>
<evidence type="ECO:0000269" key="3">
    <source>
    </source>
</evidence>
<evidence type="ECO:0000269" key="4">
    <source>
    </source>
</evidence>
<evidence type="ECO:0000269" key="5">
    <source>
    </source>
</evidence>
<evidence type="ECO:0000269" key="6">
    <source>
    </source>
</evidence>
<evidence type="ECO:0000269" key="7">
    <source>
    </source>
</evidence>
<evidence type="ECO:0000269" key="8">
    <source>
    </source>
</evidence>
<evidence type="ECO:0000269" key="9">
    <source>
    </source>
</evidence>
<evidence type="ECO:0000305" key="10"/>
<evidence type="ECO:0007744" key="11">
    <source>
    </source>
</evidence>
<evidence type="ECO:0007744" key="12">
    <source>
    </source>
</evidence>
<protein>
    <recommendedName>
        <fullName>Nuclear nucleic acid-binding protein C1D</fullName>
        <shortName>hC1D</shortName>
    </recommendedName>
</protein>
<proteinExistence type="evidence at protein level"/>
<name>C1D_HUMAN</name>
<sequence>MAGEEINEDYPVEIHEYLSAFENSIGAVDEMLKTMMSVSRNELLQKLDPLEQAKVDLVSAYTLNSMFWVYLATQGVNPKEHPVKQELERIRVYMNRVKEITDKKKAGKLDRGAASRFVKNALWEPKSKNASKVANKGKSKS</sequence>
<accession>Q13901</accession>
<accession>A8K336</accession>
<accession>D6W5F8</accession>
<accession>Q05D64</accession>
<comment type="function">
    <text evidence="2 3 4 5 8">Plays a role in the recruitment of the RNA exosome complex to pre-rRNA to mediate the 3'-5' end processing of the 5.8S rRNA; this function may include MPHOSPH6. Can activate PRKDC not only in the presence of linear DNA but also in the presence of supercoiled DNA. Can induce apoptosis in a p53/TP53 dependent manner. May regulate the TRAX/TSN complex formation. Potentiates transcriptional repression by NR1D1 and THRB (By similarity).</text>
</comment>
<comment type="subunit">
    <text evidence="2 4 5 6 7 8 9">Monomer and homodimer. Interacts with NR1D1, THRA, THRB, NCOR1 and NCOR2 (By similarity). Associates with the RNA exosome complex (PubMed:30047866). Interacts with EXOSC10; the interaction probably mediates the association with the nuclear form of the RNA exosome. The homodimeric form interacts with TSNAX following gamma-radiation. Interacts with RAC3.</text>
</comment>
<comment type="interaction">
    <interactant intactId="EBI-3844053">
        <id>Q13901</id>
    </interactant>
    <interactant intactId="EBI-718729">
        <id>P55212</id>
        <label>CASP6</label>
    </interactant>
    <organismsDiffer>false</organismsDiffer>
    <experiments>3</experiments>
</comment>
<comment type="interaction">
    <interactant intactId="EBI-3844053">
        <id>Q13901</id>
    </interactant>
    <interactant intactId="EBI-358236">
        <id>Q01780</id>
        <label>EXOSC10</label>
    </interactant>
    <organismsDiffer>false</organismsDiffer>
    <experiments>7</experiments>
</comment>
<comment type="interaction">
    <interactant intactId="EBI-3844053">
        <id>Q13901</id>
    </interactant>
    <interactant intactId="EBI-19954058">
        <id>O15499</id>
        <label>GSC2</label>
    </interactant>
    <organismsDiffer>false</organismsDiffer>
    <experiments>3</experiments>
</comment>
<comment type="interaction">
    <interactant intactId="EBI-3844053">
        <id>Q13901</id>
    </interactant>
    <interactant intactId="EBI-473886">
        <id>O00291</id>
        <label>HIP1</label>
    </interactant>
    <organismsDiffer>false</organismsDiffer>
    <experiments>3</experiments>
</comment>
<comment type="interaction">
    <interactant intactId="EBI-3844053">
        <id>Q13901</id>
    </interactant>
    <interactant intactId="EBI-466029">
        <id>P42858</id>
        <label>HTT</label>
    </interactant>
    <organismsDiffer>false</organismsDiffer>
    <experiments>6</experiments>
</comment>
<comment type="interaction">
    <interactant intactId="EBI-3844053">
        <id>Q13901</id>
    </interactant>
    <interactant intactId="EBI-10248005">
        <id>Q5VWK5</id>
        <label>IL23R</label>
    </interactant>
    <organismsDiffer>false</organismsDiffer>
    <experiments>3</experiments>
</comment>
<comment type="interaction">
    <interactant intactId="EBI-3844053">
        <id>Q13901</id>
    </interactant>
    <interactant intactId="EBI-21591415">
        <id>P13473-2</id>
        <label>LAMP2</label>
    </interactant>
    <organismsDiffer>false</organismsDiffer>
    <experiments>3</experiments>
</comment>
<comment type="interaction">
    <interactant intactId="EBI-3844053">
        <id>Q13901</id>
    </interactant>
    <interactant intactId="EBI-286642">
        <id>P62826</id>
        <label>RAN</label>
    </interactant>
    <organismsDiffer>false</organismsDiffer>
    <experiments>3</experiments>
</comment>
<comment type="interaction">
    <interactant intactId="EBI-3844053">
        <id>Q13901</id>
    </interactant>
    <interactant intactId="EBI-2623095">
        <id>Q9Y371</id>
        <label>SH3GLB1</label>
    </interactant>
    <organismsDiffer>false</organismsDiffer>
    <experiments>6</experiments>
</comment>
<comment type="interaction">
    <interactant intactId="EBI-3844053">
        <id>Q13901</id>
    </interactant>
    <interactant intactId="EBI-3921347">
        <id>P51687</id>
        <label>SUOX</label>
    </interactant>
    <organismsDiffer>false</organismsDiffer>
    <experiments>3</experiments>
</comment>
<comment type="interaction">
    <interactant intactId="EBI-3844053">
        <id>Q13901</id>
    </interactant>
    <interactant intactId="EBI-720609">
        <id>O76024</id>
        <label>WFS1</label>
    </interactant>
    <organismsDiffer>false</organismsDiffer>
    <experiments>3</experiments>
</comment>
<comment type="interaction">
    <interactant intactId="EBI-3844053">
        <id>Q13901</id>
    </interactant>
    <interactant intactId="EBI-10183064">
        <id>Q8N5A5-2</id>
        <label>ZGPAT</label>
    </interactant>
    <organismsDiffer>false</organismsDiffer>
    <experiments>3</experiments>
</comment>
<comment type="subcellular location">
    <subcellularLocation>
        <location evidence="4">Nucleus</location>
    </subcellularLocation>
    <subcellularLocation>
        <location evidence="4">Cytoplasm</location>
    </subcellularLocation>
    <subcellularLocation>
        <location evidence="5">Nucleus</location>
        <location evidence="5">Nucleolus</location>
    </subcellularLocation>
    <text evidence="4 5">EXOSC10 is required for nucleolar localization (PubMed:17412707). Colocalizes with TSNAX in the nucleus (PubMed:11801738).</text>
</comment>
<comment type="tissue specificity">
    <text evidence="3">Ubiquitous. Expressed at very high levels in the hippocampus, medulla oblongata, mammary gland, thyroid and salivary gland. Expressed at high levels in the fetal; lung, liver and kidney. Expressed at low levels in skeletal muscle, appendix, heart, lung and colon.</text>
</comment>
<comment type="induction">
    <text evidence="8">By gamma-radiation.</text>
</comment>
<comment type="PTM">
    <text evidence="8">Phosphorylated by PRKDC.</text>
</comment>
<comment type="similarity">
    <text evidence="10">Belongs to the C1D family.</text>
</comment>
<feature type="chain" id="PRO_0000316300" description="Nuclear nucleic acid-binding protein C1D">
    <location>
        <begin position="1"/>
        <end position="141"/>
    </location>
</feature>
<feature type="region of interest" description="Required for transcriptional repression" evidence="1">
    <location>
        <begin position="1"/>
        <end position="100"/>
    </location>
</feature>
<feature type="region of interest" description="Interaction with NR1D1" evidence="1">
    <location>
        <begin position="50"/>
        <end position="100"/>
    </location>
</feature>
<feature type="region of interest" description="Interaction with NCOR1 and NCOR2" evidence="1">
    <location>
        <begin position="100"/>
        <end position="141"/>
    </location>
</feature>
<feature type="cross-link" description="Glycyl lysine isopeptide (Lys-Gly) (interchain with G-Cter in SUMO2)" evidence="11 12">
    <location>
        <position position="119"/>
    </location>
</feature>
<feature type="cross-link" description="Glycyl lysine isopeptide (Lys-Gly) (interchain with G-Cter in SUMO2)" evidence="12">
    <location>
        <position position="126"/>
    </location>
</feature>
<feature type="cross-link" description="Glycyl lysine isopeptide (Lys-Gly) (interchain with G-Cter in SUMO2)" evidence="12">
    <location>
        <position position="132"/>
    </location>
</feature>
<feature type="sequence variant" id="VAR_053990" description="In dbSNP:rs10444.">
    <original>S</original>
    <variation>P</variation>
    <location>
        <position position="127"/>
    </location>
</feature>
<feature type="sequence conflict" description="In Ref. 2; BAF83140." evidence="10" ref="2">
    <original>V</original>
    <variation>I</variation>
    <location>
        <position position="76"/>
    </location>
</feature>
<dbReference type="EMBL" id="X95592">
    <property type="protein sequence ID" value="CAA64845.1"/>
    <property type="molecule type" value="mRNA"/>
</dbReference>
<dbReference type="EMBL" id="AK290451">
    <property type="protein sequence ID" value="BAF83140.1"/>
    <property type="molecule type" value="mRNA"/>
</dbReference>
<dbReference type="EMBL" id="AC079112">
    <property type="protein sequence ID" value="AAX88887.1"/>
    <property type="molecule type" value="Genomic_DNA"/>
</dbReference>
<dbReference type="EMBL" id="CH471053">
    <property type="protein sequence ID" value="EAW99884.1"/>
    <property type="molecule type" value="Genomic_DNA"/>
</dbReference>
<dbReference type="EMBL" id="CH471053">
    <property type="protein sequence ID" value="EAW99885.1"/>
    <property type="molecule type" value="Genomic_DNA"/>
</dbReference>
<dbReference type="EMBL" id="BC005235">
    <property type="protein sequence ID" value="AAH05235.1"/>
    <property type="molecule type" value="mRNA"/>
</dbReference>
<dbReference type="EMBL" id="BC009584">
    <property type="protein sequence ID" value="AAH09584.1"/>
    <property type="molecule type" value="mRNA"/>
</dbReference>
<dbReference type="EMBL" id="BC009589">
    <property type="protein sequence ID" value="AAH09589.1"/>
    <property type="molecule type" value="mRNA"/>
</dbReference>
<dbReference type="EMBL" id="BC016284">
    <property type="protein sequence ID" value="AAH16284.1"/>
    <property type="molecule type" value="mRNA"/>
</dbReference>
<dbReference type="CCDS" id="CCDS1883.1"/>
<dbReference type="RefSeq" id="NP_001177192.1">
    <property type="nucleotide sequence ID" value="NM_001190263.2"/>
</dbReference>
<dbReference type="RefSeq" id="NP_001177194.1">
    <property type="nucleotide sequence ID" value="NM_001190265.2"/>
</dbReference>
<dbReference type="RefSeq" id="NP_006324.1">
    <property type="nucleotide sequence ID" value="NM_006333.4"/>
</dbReference>
<dbReference type="RefSeq" id="NP_775269.1">
    <property type="nucleotide sequence ID" value="NM_173177.3"/>
</dbReference>
<dbReference type="EMDB" id="EMD-0127"/>
<dbReference type="EMDB" id="EMD-14515"/>
<dbReference type="EMDB" id="EMD-7818"/>
<dbReference type="EMDB" id="EMD-7819"/>
<dbReference type="SMR" id="Q13901"/>
<dbReference type="BioGRID" id="115705">
    <property type="interactions" value="62"/>
</dbReference>
<dbReference type="CORUM" id="Q13901"/>
<dbReference type="FunCoup" id="Q13901">
    <property type="interactions" value="2590"/>
</dbReference>
<dbReference type="IntAct" id="Q13901">
    <property type="interactions" value="43"/>
</dbReference>
<dbReference type="MINT" id="Q13901"/>
<dbReference type="STRING" id="9606.ENSP00000348107"/>
<dbReference type="iPTMnet" id="Q13901"/>
<dbReference type="PhosphoSitePlus" id="Q13901"/>
<dbReference type="BioMuta" id="C1D"/>
<dbReference type="DMDM" id="74754472"/>
<dbReference type="jPOST" id="Q13901"/>
<dbReference type="MassIVE" id="Q13901"/>
<dbReference type="PaxDb" id="9606-ENSP00000348107"/>
<dbReference type="PeptideAtlas" id="Q13901"/>
<dbReference type="ProteomicsDB" id="59719"/>
<dbReference type="Pumba" id="Q13901"/>
<dbReference type="TopDownProteomics" id="Q13901"/>
<dbReference type="Antibodypedia" id="30893">
    <property type="antibodies" value="292 antibodies from 32 providers"/>
</dbReference>
<dbReference type="DNASU" id="10438"/>
<dbReference type="Ensembl" id="ENST00000355848.7">
    <property type="protein sequence ID" value="ENSP00000348107.3"/>
    <property type="gene ID" value="ENSG00000197223.12"/>
</dbReference>
<dbReference type="Ensembl" id="ENST00000409302.1">
    <property type="protein sequence ID" value="ENSP00000386779.1"/>
    <property type="gene ID" value="ENSG00000197223.12"/>
</dbReference>
<dbReference type="Ensembl" id="ENST00000410067.8">
    <property type="protein sequence ID" value="ENSP00000386468.3"/>
    <property type="gene ID" value="ENSG00000197223.12"/>
</dbReference>
<dbReference type="GeneID" id="10438"/>
<dbReference type="KEGG" id="hsa:10438"/>
<dbReference type="MANE-Select" id="ENST00000410067.8">
    <property type="protein sequence ID" value="ENSP00000386468.3"/>
    <property type="RefSeq nucleotide sequence ID" value="NM_173177.3"/>
    <property type="RefSeq protein sequence ID" value="NP_775269.1"/>
</dbReference>
<dbReference type="UCSC" id="uc002seb.4">
    <property type="organism name" value="human"/>
</dbReference>
<dbReference type="AGR" id="HGNC:29911"/>
<dbReference type="CTD" id="10438"/>
<dbReference type="DisGeNET" id="10438"/>
<dbReference type="GeneCards" id="C1D"/>
<dbReference type="HGNC" id="HGNC:29911">
    <property type="gene designation" value="C1D"/>
</dbReference>
<dbReference type="HPA" id="ENSG00000197223">
    <property type="expression patterns" value="Low tissue specificity"/>
</dbReference>
<dbReference type="MIM" id="606997">
    <property type="type" value="gene"/>
</dbReference>
<dbReference type="neXtProt" id="NX_Q13901"/>
<dbReference type="OpenTargets" id="ENSG00000197223"/>
<dbReference type="PharmGKB" id="PA164717007"/>
<dbReference type="VEuPathDB" id="HostDB:ENSG00000197223"/>
<dbReference type="eggNOG" id="KOG4835">
    <property type="taxonomic scope" value="Eukaryota"/>
</dbReference>
<dbReference type="GeneTree" id="ENSGT00390000015405"/>
<dbReference type="HOGENOM" id="CLU_064339_4_1_1"/>
<dbReference type="InParanoid" id="Q13901"/>
<dbReference type="OMA" id="KLMSMPR"/>
<dbReference type="OrthoDB" id="1421013at2759"/>
<dbReference type="PAN-GO" id="Q13901">
    <property type="GO annotations" value="6 GO annotations based on evolutionary models"/>
</dbReference>
<dbReference type="PhylomeDB" id="Q13901"/>
<dbReference type="TreeFam" id="TF314651"/>
<dbReference type="PathwayCommons" id="Q13901"/>
<dbReference type="Reactome" id="R-HSA-6791226">
    <property type="pathway name" value="Major pathway of rRNA processing in the nucleolus and cytosol"/>
</dbReference>
<dbReference type="SignaLink" id="Q13901"/>
<dbReference type="SIGNOR" id="Q13901"/>
<dbReference type="BioGRID-ORCS" id="10438">
    <property type="hits" value="274 hits in 1125 CRISPR screens"/>
</dbReference>
<dbReference type="CD-CODE" id="91857CE7">
    <property type="entry name" value="Nucleolus"/>
</dbReference>
<dbReference type="ChiTaRS" id="C1D">
    <property type="organism name" value="human"/>
</dbReference>
<dbReference type="GeneWiki" id="C1D"/>
<dbReference type="GenomeRNAi" id="10438"/>
<dbReference type="Pharos" id="Q13901">
    <property type="development level" value="Tbio"/>
</dbReference>
<dbReference type="PRO" id="PR:Q13901"/>
<dbReference type="Proteomes" id="UP000005640">
    <property type="component" value="Chromosome 2"/>
</dbReference>
<dbReference type="RNAct" id="Q13901">
    <property type="molecule type" value="protein"/>
</dbReference>
<dbReference type="Bgee" id="ENSG00000197223">
    <property type="expression patterns" value="Expressed in islet of Langerhans and 99 other cell types or tissues"/>
</dbReference>
<dbReference type="ExpressionAtlas" id="Q13901">
    <property type="expression patterns" value="baseline and differential"/>
</dbReference>
<dbReference type="GO" id="GO:0005737">
    <property type="term" value="C:cytoplasm"/>
    <property type="evidence" value="ECO:0007669"/>
    <property type="project" value="UniProtKB-SubCell"/>
</dbReference>
<dbReference type="GO" id="GO:0000178">
    <property type="term" value="C:exosome (RNase complex)"/>
    <property type="evidence" value="ECO:0000318"/>
    <property type="project" value="GO_Central"/>
</dbReference>
<dbReference type="GO" id="GO:0000176">
    <property type="term" value="C:nuclear exosome (RNase complex)"/>
    <property type="evidence" value="ECO:0000304"/>
    <property type="project" value="UniProtKB"/>
</dbReference>
<dbReference type="GO" id="GO:0005730">
    <property type="term" value="C:nucleolus"/>
    <property type="evidence" value="ECO:0000314"/>
    <property type="project" value="HPA"/>
</dbReference>
<dbReference type="GO" id="GO:0005654">
    <property type="term" value="C:nucleoplasm"/>
    <property type="evidence" value="ECO:0000314"/>
    <property type="project" value="HPA"/>
</dbReference>
<dbReference type="GO" id="GO:0005634">
    <property type="term" value="C:nucleus"/>
    <property type="evidence" value="ECO:0000304"/>
    <property type="project" value="ProtInc"/>
</dbReference>
<dbReference type="GO" id="GO:0017053">
    <property type="term" value="C:transcription repressor complex"/>
    <property type="evidence" value="ECO:0007669"/>
    <property type="project" value="Ensembl"/>
</dbReference>
<dbReference type="GO" id="GO:0003677">
    <property type="term" value="F:DNA binding"/>
    <property type="evidence" value="ECO:0000318"/>
    <property type="project" value="GO_Central"/>
</dbReference>
<dbReference type="GO" id="GO:0016922">
    <property type="term" value="F:nuclear receptor binding"/>
    <property type="evidence" value="ECO:0007669"/>
    <property type="project" value="Ensembl"/>
</dbReference>
<dbReference type="GO" id="GO:0003723">
    <property type="term" value="F:RNA binding"/>
    <property type="evidence" value="ECO:0000314"/>
    <property type="project" value="UniProtKB"/>
</dbReference>
<dbReference type="GO" id="GO:0003714">
    <property type="term" value="F:transcription corepressor activity"/>
    <property type="evidence" value="ECO:0007669"/>
    <property type="project" value="Ensembl"/>
</dbReference>
<dbReference type="GO" id="GO:0006915">
    <property type="term" value="P:apoptotic process"/>
    <property type="evidence" value="ECO:0007669"/>
    <property type="project" value="UniProtKB-KW"/>
</dbReference>
<dbReference type="GO" id="GO:0000460">
    <property type="term" value="P:maturation of 5.8S rRNA"/>
    <property type="evidence" value="ECO:0000315"/>
    <property type="project" value="UniProtKB"/>
</dbReference>
<dbReference type="GO" id="GO:0010468">
    <property type="term" value="P:regulation of gene expression"/>
    <property type="evidence" value="ECO:0000318"/>
    <property type="project" value="GO_Central"/>
</dbReference>
<dbReference type="InterPro" id="IPR011082">
    <property type="entry name" value="Exosome-assoc_fac/DNA_repair"/>
</dbReference>
<dbReference type="InterPro" id="IPR007146">
    <property type="entry name" value="Sas10/Utp3/C1D"/>
</dbReference>
<dbReference type="PANTHER" id="PTHR15341:SF3">
    <property type="entry name" value="NUCLEAR NUCLEIC ACID-BINDING PROTEIN C1D"/>
    <property type="match status" value="1"/>
</dbReference>
<dbReference type="PANTHER" id="PTHR15341">
    <property type="entry name" value="SUN-COR STEROID HORMONE RECEPTOR CO-REPRESSOR"/>
    <property type="match status" value="1"/>
</dbReference>
<dbReference type="Pfam" id="PF04000">
    <property type="entry name" value="Sas10_Utp3"/>
    <property type="match status" value="1"/>
</dbReference>
<reference key="1">
    <citation type="journal article" date="1998" name="Nucleic Acids Res.">
        <title>cDNA cloning, recombinant expression and characterization of polypeptides with exceptional DNA affinity.</title>
        <authorList>
            <person name="Nehls P."/>
            <person name="Keck T."/>
            <person name="Greferath R."/>
            <person name="Spiess E."/>
            <person name="Glaser T."/>
            <person name="Rothbarth K."/>
            <person name="Stammer H."/>
            <person name="Werner D."/>
        </authorList>
    </citation>
    <scope>NUCLEOTIDE SEQUENCE [MRNA]</scope>
    <scope>SUBUNIT</scope>
    <source>
        <tissue>Term placenta</tissue>
    </source>
</reference>
<reference key="2">
    <citation type="journal article" date="2004" name="Nat. Genet.">
        <title>Complete sequencing and characterization of 21,243 full-length human cDNAs.</title>
        <authorList>
            <person name="Ota T."/>
            <person name="Suzuki Y."/>
            <person name="Nishikawa T."/>
            <person name="Otsuki T."/>
            <person name="Sugiyama T."/>
            <person name="Irie R."/>
            <person name="Wakamatsu A."/>
            <person name="Hayashi K."/>
            <person name="Sato H."/>
            <person name="Nagai K."/>
            <person name="Kimura K."/>
            <person name="Makita H."/>
            <person name="Sekine M."/>
            <person name="Obayashi M."/>
            <person name="Nishi T."/>
            <person name="Shibahara T."/>
            <person name="Tanaka T."/>
            <person name="Ishii S."/>
            <person name="Yamamoto J."/>
            <person name="Saito K."/>
            <person name="Kawai Y."/>
            <person name="Isono Y."/>
            <person name="Nakamura Y."/>
            <person name="Nagahari K."/>
            <person name="Murakami K."/>
            <person name="Yasuda T."/>
            <person name="Iwayanagi T."/>
            <person name="Wagatsuma M."/>
            <person name="Shiratori A."/>
            <person name="Sudo H."/>
            <person name="Hosoiri T."/>
            <person name="Kaku Y."/>
            <person name="Kodaira H."/>
            <person name="Kondo H."/>
            <person name="Sugawara M."/>
            <person name="Takahashi M."/>
            <person name="Kanda K."/>
            <person name="Yokoi T."/>
            <person name="Furuya T."/>
            <person name="Kikkawa E."/>
            <person name="Omura Y."/>
            <person name="Abe K."/>
            <person name="Kamihara K."/>
            <person name="Katsuta N."/>
            <person name="Sato K."/>
            <person name="Tanikawa M."/>
            <person name="Yamazaki M."/>
            <person name="Ninomiya K."/>
            <person name="Ishibashi T."/>
            <person name="Yamashita H."/>
            <person name="Murakawa K."/>
            <person name="Fujimori K."/>
            <person name="Tanai H."/>
            <person name="Kimata M."/>
            <person name="Watanabe M."/>
            <person name="Hiraoka S."/>
            <person name="Chiba Y."/>
            <person name="Ishida S."/>
            <person name="Ono Y."/>
            <person name="Takiguchi S."/>
            <person name="Watanabe S."/>
            <person name="Yosida M."/>
            <person name="Hotuta T."/>
            <person name="Kusano J."/>
            <person name="Kanehori K."/>
            <person name="Takahashi-Fujii A."/>
            <person name="Hara H."/>
            <person name="Tanase T.-O."/>
            <person name="Nomura Y."/>
            <person name="Togiya S."/>
            <person name="Komai F."/>
            <person name="Hara R."/>
            <person name="Takeuchi K."/>
            <person name="Arita M."/>
            <person name="Imose N."/>
            <person name="Musashino K."/>
            <person name="Yuuki H."/>
            <person name="Oshima A."/>
            <person name="Sasaki N."/>
            <person name="Aotsuka S."/>
            <person name="Yoshikawa Y."/>
            <person name="Matsunawa H."/>
            <person name="Ichihara T."/>
            <person name="Shiohata N."/>
            <person name="Sano S."/>
            <person name="Moriya S."/>
            <person name="Momiyama H."/>
            <person name="Satoh N."/>
            <person name="Takami S."/>
            <person name="Terashima Y."/>
            <person name="Suzuki O."/>
            <person name="Nakagawa S."/>
            <person name="Senoh A."/>
            <person name="Mizoguchi H."/>
            <person name="Goto Y."/>
            <person name="Shimizu F."/>
            <person name="Wakebe H."/>
            <person name="Hishigaki H."/>
            <person name="Watanabe T."/>
            <person name="Sugiyama A."/>
            <person name="Takemoto M."/>
            <person name="Kawakami B."/>
            <person name="Yamazaki M."/>
            <person name="Watanabe K."/>
            <person name="Kumagai A."/>
            <person name="Itakura S."/>
            <person name="Fukuzumi Y."/>
            <person name="Fujimori Y."/>
            <person name="Komiyama M."/>
            <person name="Tashiro H."/>
            <person name="Tanigami A."/>
            <person name="Fujiwara T."/>
            <person name="Ono T."/>
            <person name="Yamada K."/>
            <person name="Fujii Y."/>
            <person name="Ozaki K."/>
            <person name="Hirao M."/>
            <person name="Ohmori Y."/>
            <person name="Kawabata A."/>
            <person name="Hikiji T."/>
            <person name="Kobatake N."/>
            <person name="Inagaki H."/>
            <person name="Ikema Y."/>
            <person name="Okamoto S."/>
            <person name="Okitani R."/>
            <person name="Kawakami T."/>
            <person name="Noguchi S."/>
            <person name="Itoh T."/>
            <person name="Shigeta K."/>
            <person name="Senba T."/>
            <person name="Matsumura K."/>
            <person name="Nakajima Y."/>
            <person name="Mizuno T."/>
            <person name="Morinaga M."/>
            <person name="Sasaki M."/>
            <person name="Togashi T."/>
            <person name="Oyama M."/>
            <person name="Hata H."/>
            <person name="Watanabe M."/>
            <person name="Komatsu T."/>
            <person name="Mizushima-Sugano J."/>
            <person name="Satoh T."/>
            <person name="Shirai Y."/>
            <person name="Takahashi Y."/>
            <person name="Nakagawa K."/>
            <person name="Okumura K."/>
            <person name="Nagase T."/>
            <person name="Nomura N."/>
            <person name="Kikuchi H."/>
            <person name="Masuho Y."/>
            <person name="Yamashita R."/>
            <person name="Nakai K."/>
            <person name="Yada T."/>
            <person name="Nakamura Y."/>
            <person name="Ohara O."/>
            <person name="Isogai T."/>
            <person name="Sugano S."/>
        </authorList>
    </citation>
    <scope>NUCLEOTIDE SEQUENCE [LARGE SCALE MRNA]</scope>
    <source>
        <tissue>Brain</tissue>
    </source>
</reference>
<reference key="3">
    <citation type="journal article" date="2005" name="Nature">
        <title>Generation and annotation of the DNA sequences of human chromosomes 2 and 4.</title>
        <authorList>
            <person name="Hillier L.W."/>
            <person name="Graves T.A."/>
            <person name="Fulton R.S."/>
            <person name="Fulton L.A."/>
            <person name="Pepin K.H."/>
            <person name="Minx P."/>
            <person name="Wagner-McPherson C."/>
            <person name="Layman D."/>
            <person name="Wylie K."/>
            <person name="Sekhon M."/>
            <person name="Becker M.C."/>
            <person name="Fewell G.A."/>
            <person name="Delehaunty K.D."/>
            <person name="Miner T.L."/>
            <person name="Nash W.E."/>
            <person name="Kremitzki C."/>
            <person name="Oddy L."/>
            <person name="Du H."/>
            <person name="Sun H."/>
            <person name="Bradshaw-Cordum H."/>
            <person name="Ali J."/>
            <person name="Carter J."/>
            <person name="Cordes M."/>
            <person name="Harris A."/>
            <person name="Isak A."/>
            <person name="van Brunt A."/>
            <person name="Nguyen C."/>
            <person name="Du F."/>
            <person name="Courtney L."/>
            <person name="Kalicki J."/>
            <person name="Ozersky P."/>
            <person name="Abbott S."/>
            <person name="Armstrong J."/>
            <person name="Belter E.A."/>
            <person name="Caruso L."/>
            <person name="Cedroni M."/>
            <person name="Cotton M."/>
            <person name="Davidson T."/>
            <person name="Desai A."/>
            <person name="Elliott G."/>
            <person name="Erb T."/>
            <person name="Fronick C."/>
            <person name="Gaige T."/>
            <person name="Haakenson W."/>
            <person name="Haglund K."/>
            <person name="Holmes A."/>
            <person name="Harkins R."/>
            <person name="Kim K."/>
            <person name="Kruchowski S.S."/>
            <person name="Strong C.M."/>
            <person name="Grewal N."/>
            <person name="Goyea E."/>
            <person name="Hou S."/>
            <person name="Levy A."/>
            <person name="Martinka S."/>
            <person name="Mead K."/>
            <person name="McLellan M.D."/>
            <person name="Meyer R."/>
            <person name="Randall-Maher J."/>
            <person name="Tomlinson C."/>
            <person name="Dauphin-Kohlberg S."/>
            <person name="Kozlowicz-Reilly A."/>
            <person name="Shah N."/>
            <person name="Swearengen-Shahid S."/>
            <person name="Snider J."/>
            <person name="Strong J.T."/>
            <person name="Thompson J."/>
            <person name="Yoakum M."/>
            <person name="Leonard S."/>
            <person name="Pearman C."/>
            <person name="Trani L."/>
            <person name="Radionenko M."/>
            <person name="Waligorski J.E."/>
            <person name="Wang C."/>
            <person name="Rock S.M."/>
            <person name="Tin-Wollam A.-M."/>
            <person name="Maupin R."/>
            <person name="Latreille P."/>
            <person name="Wendl M.C."/>
            <person name="Yang S.-P."/>
            <person name="Pohl C."/>
            <person name="Wallis J.W."/>
            <person name="Spieth J."/>
            <person name="Bieri T.A."/>
            <person name="Berkowicz N."/>
            <person name="Nelson J.O."/>
            <person name="Osborne J."/>
            <person name="Ding L."/>
            <person name="Meyer R."/>
            <person name="Sabo A."/>
            <person name="Shotland Y."/>
            <person name="Sinha P."/>
            <person name="Wohldmann P.E."/>
            <person name="Cook L.L."/>
            <person name="Hickenbotham M.T."/>
            <person name="Eldred J."/>
            <person name="Williams D."/>
            <person name="Jones T.A."/>
            <person name="She X."/>
            <person name="Ciccarelli F.D."/>
            <person name="Izaurralde E."/>
            <person name="Taylor J."/>
            <person name="Schmutz J."/>
            <person name="Myers R.M."/>
            <person name="Cox D.R."/>
            <person name="Huang X."/>
            <person name="McPherson J.D."/>
            <person name="Mardis E.R."/>
            <person name="Clifton S.W."/>
            <person name="Warren W.C."/>
            <person name="Chinwalla A.T."/>
            <person name="Eddy S.R."/>
            <person name="Marra M.A."/>
            <person name="Ovcharenko I."/>
            <person name="Furey T.S."/>
            <person name="Miller W."/>
            <person name="Eichler E.E."/>
            <person name="Bork P."/>
            <person name="Suyama M."/>
            <person name="Torrents D."/>
            <person name="Waterston R.H."/>
            <person name="Wilson R.K."/>
        </authorList>
    </citation>
    <scope>NUCLEOTIDE SEQUENCE [LARGE SCALE GENOMIC DNA]</scope>
</reference>
<reference key="4">
    <citation type="submission" date="2005-09" db="EMBL/GenBank/DDBJ databases">
        <authorList>
            <person name="Mural R.J."/>
            <person name="Istrail S."/>
            <person name="Sutton G.G."/>
            <person name="Florea L."/>
            <person name="Halpern A.L."/>
            <person name="Mobarry C.M."/>
            <person name="Lippert R."/>
            <person name="Walenz B."/>
            <person name="Shatkay H."/>
            <person name="Dew I."/>
            <person name="Miller J.R."/>
            <person name="Flanigan M.J."/>
            <person name="Edwards N.J."/>
            <person name="Bolanos R."/>
            <person name="Fasulo D."/>
            <person name="Halldorsson B.V."/>
            <person name="Hannenhalli S."/>
            <person name="Turner R."/>
            <person name="Yooseph S."/>
            <person name="Lu F."/>
            <person name="Nusskern D.R."/>
            <person name="Shue B.C."/>
            <person name="Zheng X.H."/>
            <person name="Zhong F."/>
            <person name="Delcher A.L."/>
            <person name="Huson D.H."/>
            <person name="Kravitz S.A."/>
            <person name="Mouchard L."/>
            <person name="Reinert K."/>
            <person name="Remington K.A."/>
            <person name="Clark A.G."/>
            <person name="Waterman M.S."/>
            <person name="Eichler E.E."/>
            <person name="Adams M.D."/>
            <person name="Hunkapiller M.W."/>
            <person name="Myers E.W."/>
            <person name="Venter J.C."/>
        </authorList>
    </citation>
    <scope>NUCLEOTIDE SEQUENCE [LARGE SCALE GENOMIC DNA]</scope>
</reference>
<reference key="5">
    <citation type="journal article" date="2004" name="Genome Res.">
        <title>The status, quality, and expansion of the NIH full-length cDNA project: the Mammalian Gene Collection (MGC).</title>
        <authorList>
            <consortium name="The MGC Project Team"/>
        </authorList>
    </citation>
    <scope>NUCLEOTIDE SEQUENCE [LARGE SCALE MRNA]</scope>
    <source>
        <tissue>Bone marrow</tissue>
        <tissue>Lung</tissue>
        <tissue>Uterus</tissue>
    </source>
</reference>
<reference key="6">
    <citation type="journal article" date="1998" name="Genes Dev.">
        <title>DNA end-independent activation of DNA-PK mediated via association with the DNA-binding protein C1D.</title>
        <authorList>
            <person name="Yavuzer U."/>
            <person name="Smith G.C.M."/>
            <person name="Bliss T."/>
            <person name="Werner D."/>
            <person name="Jackson S.P."/>
        </authorList>
    </citation>
    <scope>FUNCTION</scope>
    <scope>INDUCTION</scope>
    <scope>PHOSPHORYLATION</scope>
    <scope>INTERACTION WITH PRKDC</scope>
</reference>
<reference key="7">
    <citation type="journal article" date="1998" name="Int. J. Mol. Med.">
        <title>Identification of a novel Rac3-interacting protein C1D.</title>
        <authorList>
            <person name="Haataja L."/>
            <person name="Groffen J."/>
            <person name="Heisterkamp N."/>
        </authorList>
    </citation>
    <scope>INTERACTION WITH RAC3</scope>
</reference>
<reference key="8">
    <citation type="journal article" date="1999" name="J. Cell Sci.">
        <title>Induction of apoptosis by overexpression of the DNA-binding and DNA-PK-activating protein C1D.</title>
        <authorList>
            <person name="Rothbarth K."/>
            <person name="Spiess E."/>
            <person name="Juodka B."/>
            <person name="Yavuzer U."/>
            <person name="Nehls P."/>
            <person name="Stammer H."/>
            <person name="Werner D."/>
        </authorList>
    </citation>
    <scope>FUNCTION</scope>
    <scope>TISSUE SPECIFICITY</scope>
</reference>
<reference key="9">
    <citation type="journal article" date="2002" name="J. Cell Sci.">
        <title>DNA damage-dependent interaction of the nuclear matrix protein C1D with Translin-associated factor X (TRAX).</title>
        <authorList>
            <person name="Erdemir T."/>
            <person name="Bilican B."/>
            <person name="Oncel D."/>
            <person name="Goding C.R."/>
            <person name="Yavuzer U."/>
        </authorList>
    </citation>
    <scope>FUNCTION</scope>
    <scope>SUBCELLULAR LOCATION</scope>
    <scope>INTERACTION WITH TSNAX</scope>
</reference>
<reference key="10">
    <citation type="journal article" date="2007" name="Nucleic Acids Res.">
        <title>C1D and hMtr4p associate with the human exosome subunit PM/Scl-100 and are involved in pre-rRNA processing.</title>
        <authorList>
            <person name="Schilders G."/>
            <person name="van Dijk E."/>
            <person name="Pruijn G.J.M."/>
        </authorList>
    </citation>
    <scope>FUNCTION</scope>
    <scope>SUBCELLULAR LOCATION</scope>
    <scope>INTERACTION WITH EXOSC10</scope>
</reference>
<reference key="11">
    <citation type="journal article" date="2015" name="Cell Rep.">
        <title>SUMO-2 orchestrates chromatin modifiers in response to DNA damage.</title>
        <authorList>
            <person name="Hendriks I.A."/>
            <person name="Treffers L.W."/>
            <person name="Verlaan-de Vries M."/>
            <person name="Olsen J.V."/>
            <person name="Vertegaal A.C."/>
        </authorList>
    </citation>
    <scope>SUMOYLATION [LARGE SCALE ANALYSIS] AT LYS-119</scope>
    <scope>IDENTIFICATION BY MASS SPECTROMETRY [LARGE SCALE ANALYSIS]</scope>
</reference>
<reference key="12">
    <citation type="journal article" date="2017" name="Nat. Struct. Mol. Biol.">
        <title>Site-specific mapping of the human SUMO proteome reveals co-modification with phosphorylation.</title>
        <authorList>
            <person name="Hendriks I.A."/>
            <person name="Lyon D."/>
            <person name="Young C."/>
            <person name="Jensen L.J."/>
            <person name="Vertegaal A.C."/>
            <person name="Nielsen M.L."/>
        </authorList>
    </citation>
    <scope>SUMOYLATION [LARGE SCALE ANALYSIS] AT LYS-119; LYS-126 AND LYS-132</scope>
    <scope>IDENTIFICATION BY MASS SPECTROMETRY [LARGE SCALE ANALYSIS]</scope>
</reference>
<reference key="13">
    <citation type="journal article" date="2018" name="Elife">
        <title>Distinct and evolutionary conserved structural features of the human nuclear exosome complex.</title>
        <authorList>
            <person name="Gerlach P."/>
            <person name="Schuller J.M."/>
            <person name="Bonneau F."/>
            <person name="Basquin J."/>
            <person name="Reichelt P."/>
            <person name="Falk S."/>
            <person name="Conti E."/>
        </authorList>
    </citation>
    <scope>INTERACTION WITH THE RNA EXOSOME COMPLEX</scope>
</reference>
<keyword id="KW-0053">Apoptosis</keyword>
<keyword id="KW-0963">Cytoplasm</keyword>
<keyword id="KW-0238">DNA-binding</keyword>
<keyword id="KW-1017">Isopeptide bond</keyword>
<keyword id="KW-0539">Nucleus</keyword>
<keyword id="KW-0597">Phosphoprotein</keyword>
<keyword id="KW-1267">Proteomics identification</keyword>
<keyword id="KW-1185">Reference proteome</keyword>
<keyword id="KW-0678">Repressor</keyword>
<keyword id="KW-0694">RNA-binding</keyword>
<keyword id="KW-0698">rRNA processing</keyword>
<keyword id="KW-0804">Transcription</keyword>
<keyword id="KW-0805">Transcription regulation</keyword>
<keyword id="KW-0832">Ubl conjugation</keyword>
<organism>
    <name type="scientific">Homo sapiens</name>
    <name type="common">Human</name>
    <dbReference type="NCBI Taxonomy" id="9606"/>
    <lineage>
        <taxon>Eukaryota</taxon>
        <taxon>Metazoa</taxon>
        <taxon>Chordata</taxon>
        <taxon>Craniata</taxon>
        <taxon>Vertebrata</taxon>
        <taxon>Euteleostomi</taxon>
        <taxon>Mammalia</taxon>
        <taxon>Eutheria</taxon>
        <taxon>Euarchontoglires</taxon>
        <taxon>Primates</taxon>
        <taxon>Haplorrhini</taxon>
        <taxon>Catarrhini</taxon>
        <taxon>Hominidae</taxon>
        <taxon>Homo</taxon>
    </lineage>
</organism>